<reference key="1">
    <citation type="journal article" date="2003" name="Nature">
        <title>Genome sequence of Bacillus cereus and comparative analysis with Bacillus anthracis.</title>
        <authorList>
            <person name="Ivanova N."/>
            <person name="Sorokin A."/>
            <person name="Anderson I."/>
            <person name="Galleron N."/>
            <person name="Candelon B."/>
            <person name="Kapatral V."/>
            <person name="Bhattacharyya A."/>
            <person name="Reznik G."/>
            <person name="Mikhailova N."/>
            <person name="Lapidus A."/>
            <person name="Chu L."/>
            <person name="Mazur M."/>
            <person name="Goltsman E."/>
            <person name="Larsen N."/>
            <person name="D'Souza M."/>
            <person name="Walunas T."/>
            <person name="Grechkin Y."/>
            <person name="Pusch G."/>
            <person name="Haselkorn R."/>
            <person name="Fonstein M."/>
            <person name="Ehrlich S.D."/>
            <person name="Overbeek R."/>
            <person name="Kyrpides N.C."/>
        </authorList>
    </citation>
    <scope>NUCLEOTIDE SEQUENCE [LARGE SCALE GENOMIC DNA]</scope>
    <source>
        <strain>ATCC 14579 / DSM 31 / CCUG 7414 / JCM 2152 / NBRC 15305 / NCIMB 9373 / NCTC 2599 / NRRL B-3711</strain>
    </source>
</reference>
<accession>Q81B49</accession>
<keyword id="KW-0414">Isoprene biosynthesis</keyword>
<keyword id="KW-0464">Manganese</keyword>
<keyword id="KW-0479">Metal-binding</keyword>
<keyword id="KW-0521">NADP</keyword>
<keyword id="KW-0560">Oxidoreductase</keyword>
<keyword id="KW-1185">Reference proteome</keyword>
<gene>
    <name evidence="1" type="primary">dxr1</name>
    <name type="ordered locus">BC_3341</name>
</gene>
<dbReference type="EC" id="1.1.1.267" evidence="1"/>
<dbReference type="EMBL" id="AE016877">
    <property type="protein sequence ID" value="AAP10281.1"/>
    <property type="molecule type" value="Genomic_DNA"/>
</dbReference>
<dbReference type="RefSeq" id="NP_833080.1">
    <property type="nucleotide sequence ID" value="NC_004722.1"/>
</dbReference>
<dbReference type="RefSeq" id="WP_000241785.1">
    <property type="nucleotide sequence ID" value="NC_004722.1"/>
</dbReference>
<dbReference type="SMR" id="Q81B49"/>
<dbReference type="STRING" id="226900.BC_3341"/>
<dbReference type="KEGG" id="bce:BC3341"/>
<dbReference type="PATRIC" id="fig|226900.8.peg.3426"/>
<dbReference type="HOGENOM" id="CLU_035714_4_0_9"/>
<dbReference type="OrthoDB" id="9806546at2"/>
<dbReference type="UniPathway" id="UPA00056">
    <property type="reaction ID" value="UER00092"/>
</dbReference>
<dbReference type="Proteomes" id="UP000001417">
    <property type="component" value="Chromosome"/>
</dbReference>
<dbReference type="GO" id="GO:0030604">
    <property type="term" value="F:1-deoxy-D-xylulose-5-phosphate reductoisomerase activity"/>
    <property type="evidence" value="ECO:0000318"/>
    <property type="project" value="GO_Central"/>
</dbReference>
<dbReference type="GO" id="GO:0030145">
    <property type="term" value="F:manganese ion binding"/>
    <property type="evidence" value="ECO:0000318"/>
    <property type="project" value="GO_Central"/>
</dbReference>
<dbReference type="GO" id="GO:0070402">
    <property type="term" value="F:NADPH binding"/>
    <property type="evidence" value="ECO:0000318"/>
    <property type="project" value="GO_Central"/>
</dbReference>
<dbReference type="GO" id="GO:0051484">
    <property type="term" value="P:isopentenyl diphosphate biosynthetic process, methylerythritol 4-phosphate pathway involved in terpenoid biosynthetic process"/>
    <property type="evidence" value="ECO:0000318"/>
    <property type="project" value="GO_Central"/>
</dbReference>
<dbReference type="FunFam" id="3.40.50.720:FF:000045">
    <property type="entry name" value="1-deoxy-D-xylulose 5-phosphate reductoisomerase"/>
    <property type="match status" value="1"/>
</dbReference>
<dbReference type="Gene3D" id="1.10.1740.10">
    <property type="match status" value="1"/>
</dbReference>
<dbReference type="Gene3D" id="3.40.50.720">
    <property type="entry name" value="NAD(P)-binding Rossmann-like Domain"/>
    <property type="match status" value="1"/>
</dbReference>
<dbReference type="HAMAP" id="MF_00183">
    <property type="entry name" value="DXP_reductoisom"/>
    <property type="match status" value="1"/>
</dbReference>
<dbReference type="InterPro" id="IPR003821">
    <property type="entry name" value="DXP_reductoisomerase"/>
</dbReference>
<dbReference type="InterPro" id="IPR013644">
    <property type="entry name" value="DXP_reductoisomerase_C"/>
</dbReference>
<dbReference type="InterPro" id="IPR013512">
    <property type="entry name" value="DXP_reductoisomerase_N"/>
</dbReference>
<dbReference type="InterPro" id="IPR026877">
    <property type="entry name" value="DXPR_C"/>
</dbReference>
<dbReference type="InterPro" id="IPR036169">
    <property type="entry name" value="DXPR_C_sf"/>
</dbReference>
<dbReference type="InterPro" id="IPR036291">
    <property type="entry name" value="NAD(P)-bd_dom_sf"/>
</dbReference>
<dbReference type="NCBIfam" id="TIGR00243">
    <property type="entry name" value="Dxr"/>
    <property type="match status" value="1"/>
</dbReference>
<dbReference type="NCBIfam" id="NF009114">
    <property type="entry name" value="PRK12464.1"/>
    <property type="match status" value="1"/>
</dbReference>
<dbReference type="PANTHER" id="PTHR30525">
    <property type="entry name" value="1-DEOXY-D-XYLULOSE 5-PHOSPHATE REDUCTOISOMERASE"/>
    <property type="match status" value="1"/>
</dbReference>
<dbReference type="PANTHER" id="PTHR30525:SF0">
    <property type="entry name" value="1-DEOXY-D-XYLULOSE 5-PHOSPHATE REDUCTOISOMERASE, CHLOROPLASTIC"/>
    <property type="match status" value="1"/>
</dbReference>
<dbReference type="Pfam" id="PF08436">
    <property type="entry name" value="DXP_redisom_C"/>
    <property type="match status" value="1"/>
</dbReference>
<dbReference type="Pfam" id="PF02670">
    <property type="entry name" value="DXP_reductoisom"/>
    <property type="match status" value="1"/>
</dbReference>
<dbReference type="Pfam" id="PF13288">
    <property type="entry name" value="DXPR_C"/>
    <property type="match status" value="1"/>
</dbReference>
<dbReference type="PIRSF" id="PIRSF006205">
    <property type="entry name" value="Dxp_reductismrs"/>
    <property type="match status" value="1"/>
</dbReference>
<dbReference type="SUPFAM" id="SSF69055">
    <property type="entry name" value="1-deoxy-D-xylulose-5-phosphate reductoisomerase, C-terminal domain"/>
    <property type="match status" value="1"/>
</dbReference>
<dbReference type="SUPFAM" id="SSF55347">
    <property type="entry name" value="Glyceraldehyde-3-phosphate dehydrogenase-like, C-terminal domain"/>
    <property type="match status" value="1"/>
</dbReference>
<dbReference type="SUPFAM" id="SSF51735">
    <property type="entry name" value="NAD(P)-binding Rossmann-fold domains"/>
    <property type="match status" value="1"/>
</dbReference>
<sequence>MVKYISILGSTGSIGTSALDVVSAHPEHFKIVGLTANYNIDLLEQQIKTFQPRIVSVATKDLADKLRTRISANTKITHGTDGFIAVATHPDSNLVLSSVVGVSGLLPTIEALKAKKDIAIANKETLVAAGHIVTELAKQNGCRLIPVDSEHSAIFQCLKGENNKEIEKLIVTASGGAFRDKTRDEMQTLQAKDALKHPNWLMGAKLTIDSATLMNKGFEVMEARWLFDIPYKKINVMIHKESIIHSLVEFIDGSVMAQLGAPDMRMPIQYAFHYPTRLPSSYEKLNLLEIGSLHFEKPDLEKFPCLQYAYECGKIGGTTPAVLNAANEIANALFLKNEIAFFDIEKTIYKTVEAHHNVKDPSLDAILEADQWARQYANELLIKKR</sequence>
<feature type="chain" id="PRO_0000163603" description="1-deoxy-D-xylulose 5-phosphate reductoisomerase 1">
    <location>
        <begin position="1"/>
        <end position="385"/>
    </location>
</feature>
<feature type="binding site" evidence="1">
    <location>
        <position position="11"/>
    </location>
    <ligand>
        <name>NADPH</name>
        <dbReference type="ChEBI" id="CHEBI:57783"/>
    </ligand>
</feature>
<feature type="binding site" evidence="1">
    <location>
        <position position="12"/>
    </location>
    <ligand>
        <name>NADPH</name>
        <dbReference type="ChEBI" id="CHEBI:57783"/>
    </ligand>
</feature>
<feature type="binding site" evidence="1">
    <location>
        <position position="13"/>
    </location>
    <ligand>
        <name>NADPH</name>
        <dbReference type="ChEBI" id="CHEBI:57783"/>
    </ligand>
</feature>
<feature type="binding site" evidence="1">
    <location>
        <position position="14"/>
    </location>
    <ligand>
        <name>NADPH</name>
        <dbReference type="ChEBI" id="CHEBI:57783"/>
    </ligand>
</feature>
<feature type="binding site" evidence="1">
    <location>
        <position position="39"/>
    </location>
    <ligand>
        <name>NADPH</name>
        <dbReference type="ChEBI" id="CHEBI:57783"/>
    </ligand>
</feature>
<feature type="binding site" evidence="1">
    <location>
        <position position="122"/>
    </location>
    <ligand>
        <name>NADPH</name>
        <dbReference type="ChEBI" id="CHEBI:57783"/>
    </ligand>
</feature>
<feature type="binding site" evidence="1">
    <location>
        <position position="123"/>
    </location>
    <ligand>
        <name>1-deoxy-D-xylulose 5-phosphate</name>
        <dbReference type="ChEBI" id="CHEBI:57792"/>
    </ligand>
</feature>
<feature type="binding site" evidence="1">
    <location>
        <position position="124"/>
    </location>
    <ligand>
        <name>NADPH</name>
        <dbReference type="ChEBI" id="CHEBI:57783"/>
    </ligand>
</feature>
<feature type="binding site" evidence="1">
    <location>
        <position position="148"/>
    </location>
    <ligand>
        <name>Mn(2+)</name>
        <dbReference type="ChEBI" id="CHEBI:29035"/>
    </ligand>
</feature>
<feature type="binding site" evidence="1">
    <location>
        <position position="149"/>
    </location>
    <ligand>
        <name>1-deoxy-D-xylulose 5-phosphate</name>
        <dbReference type="ChEBI" id="CHEBI:57792"/>
    </ligand>
</feature>
<feature type="binding site" evidence="1">
    <location>
        <position position="150"/>
    </location>
    <ligand>
        <name>1-deoxy-D-xylulose 5-phosphate</name>
        <dbReference type="ChEBI" id="CHEBI:57792"/>
    </ligand>
</feature>
<feature type="binding site" evidence="1">
    <location>
        <position position="150"/>
    </location>
    <ligand>
        <name>Mn(2+)</name>
        <dbReference type="ChEBI" id="CHEBI:29035"/>
    </ligand>
</feature>
<feature type="binding site" evidence="1">
    <location>
        <position position="174"/>
    </location>
    <ligand>
        <name>1-deoxy-D-xylulose 5-phosphate</name>
        <dbReference type="ChEBI" id="CHEBI:57792"/>
    </ligand>
</feature>
<feature type="binding site" evidence="1">
    <location>
        <position position="197"/>
    </location>
    <ligand>
        <name>1-deoxy-D-xylulose 5-phosphate</name>
        <dbReference type="ChEBI" id="CHEBI:57792"/>
    </ligand>
</feature>
<feature type="binding site" evidence="1">
    <location>
        <position position="203"/>
    </location>
    <ligand>
        <name>NADPH</name>
        <dbReference type="ChEBI" id="CHEBI:57783"/>
    </ligand>
</feature>
<feature type="binding site" evidence="1">
    <location>
        <position position="210"/>
    </location>
    <ligand>
        <name>1-deoxy-D-xylulose 5-phosphate</name>
        <dbReference type="ChEBI" id="CHEBI:57792"/>
    </ligand>
</feature>
<feature type="binding site" evidence="1">
    <location>
        <position position="215"/>
    </location>
    <ligand>
        <name>1-deoxy-D-xylulose 5-phosphate</name>
        <dbReference type="ChEBI" id="CHEBI:57792"/>
    </ligand>
</feature>
<feature type="binding site" evidence="1">
    <location>
        <position position="216"/>
    </location>
    <ligand>
        <name>1-deoxy-D-xylulose 5-phosphate</name>
        <dbReference type="ChEBI" id="CHEBI:57792"/>
    </ligand>
</feature>
<feature type="binding site" evidence="1">
    <location>
        <position position="219"/>
    </location>
    <ligand>
        <name>1-deoxy-D-xylulose 5-phosphate</name>
        <dbReference type="ChEBI" id="CHEBI:57792"/>
    </ligand>
</feature>
<feature type="binding site" evidence="1">
    <location>
        <position position="219"/>
    </location>
    <ligand>
        <name>Mn(2+)</name>
        <dbReference type="ChEBI" id="CHEBI:29035"/>
    </ligand>
</feature>
<protein>
    <recommendedName>
        <fullName evidence="1">1-deoxy-D-xylulose 5-phosphate reductoisomerase 1</fullName>
        <shortName evidence="1">DXP reductoisomerase 1</shortName>
        <ecNumber evidence="1">1.1.1.267</ecNumber>
    </recommendedName>
    <alternativeName>
        <fullName evidence="1">1-deoxyxylulose-5-phosphate reductoisomerase 1</fullName>
    </alternativeName>
    <alternativeName>
        <fullName evidence="1">2-C-methyl-D-erythritol 4-phosphate synthase 1</fullName>
    </alternativeName>
</protein>
<comment type="function">
    <text evidence="1">Catalyzes the NADPH-dependent rearrangement and reduction of 1-deoxy-D-xylulose-5-phosphate (DXP) to 2-C-methyl-D-erythritol 4-phosphate (MEP).</text>
</comment>
<comment type="catalytic activity">
    <reaction evidence="1">
        <text>2-C-methyl-D-erythritol 4-phosphate + NADP(+) = 1-deoxy-D-xylulose 5-phosphate + NADPH + H(+)</text>
        <dbReference type="Rhea" id="RHEA:13717"/>
        <dbReference type="ChEBI" id="CHEBI:15378"/>
        <dbReference type="ChEBI" id="CHEBI:57783"/>
        <dbReference type="ChEBI" id="CHEBI:57792"/>
        <dbReference type="ChEBI" id="CHEBI:58262"/>
        <dbReference type="ChEBI" id="CHEBI:58349"/>
        <dbReference type="EC" id="1.1.1.267"/>
    </reaction>
    <physiologicalReaction direction="right-to-left" evidence="1">
        <dbReference type="Rhea" id="RHEA:13719"/>
    </physiologicalReaction>
</comment>
<comment type="cofactor">
    <cofactor evidence="1">
        <name>Mg(2+)</name>
        <dbReference type="ChEBI" id="CHEBI:18420"/>
    </cofactor>
    <cofactor evidence="1">
        <name>Mn(2+)</name>
        <dbReference type="ChEBI" id="CHEBI:29035"/>
    </cofactor>
</comment>
<comment type="pathway">
    <text evidence="1">Isoprenoid biosynthesis; isopentenyl diphosphate biosynthesis via DXP pathway; isopentenyl diphosphate from 1-deoxy-D-xylulose 5-phosphate: step 1/6.</text>
</comment>
<comment type="similarity">
    <text evidence="1">Belongs to the DXR family.</text>
</comment>
<organism>
    <name type="scientific">Bacillus cereus (strain ATCC 14579 / DSM 31 / CCUG 7414 / JCM 2152 / NBRC 15305 / NCIMB 9373 / NCTC 2599 / NRRL B-3711)</name>
    <dbReference type="NCBI Taxonomy" id="226900"/>
    <lineage>
        <taxon>Bacteria</taxon>
        <taxon>Bacillati</taxon>
        <taxon>Bacillota</taxon>
        <taxon>Bacilli</taxon>
        <taxon>Bacillales</taxon>
        <taxon>Bacillaceae</taxon>
        <taxon>Bacillus</taxon>
        <taxon>Bacillus cereus group</taxon>
    </lineage>
</organism>
<evidence type="ECO:0000255" key="1">
    <source>
        <dbReference type="HAMAP-Rule" id="MF_00183"/>
    </source>
</evidence>
<name>DXR1_BACCR</name>
<proteinExistence type="inferred from homology"/>